<organism>
    <name type="scientific">Xenopus laevis</name>
    <name type="common">African clawed frog</name>
    <dbReference type="NCBI Taxonomy" id="8355"/>
    <lineage>
        <taxon>Eukaryota</taxon>
        <taxon>Metazoa</taxon>
        <taxon>Chordata</taxon>
        <taxon>Craniata</taxon>
        <taxon>Vertebrata</taxon>
        <taxon>Euteleostomi</taxon>
        <taxon>Amphibia</taxon>
        <taxon>Batrachia</taxon>
        <taxon>Anura</taxon>
        <taxon>Pipoidea</taxon>
        <taxon>Pipidae</taxon>
        <taxon>Xenopodinae</taxon>
        <taxon>Xenopus</taxon>
        <taxon>Xenopus</taxon>
    </lineage>
</organism>
<feature type="chain" id="PRO_0000382465" description="Baculoviral IAP repeat-containing protein 5.2-B">
    <location>
        <begin position="1"/>
        <end position="157"/>
    </location>
</feature>
<feature type="repeat" description="BIR" evidence="4">
    <location>
        <begin position="31"/>
        <end position="101"/>
    </location>
</feature>
<feature type="binding site" evidence="2 5">
    <location>
        <position position="70"/>
    </location>
    <ligand>
        <name>Zn(2+)</name>
        <dbReference type="ChEBI" id="CHEBI:29105"/>
    </ligand>
</feature>
<feature type="binding site" evidence="2 5">
    <location>
        <position position="73"/>
    </location>
    <ligand>
        <name>Zn(2+)</name>
        <dbReference type="ChEBI" id="CHEBI:29105"/>
    </ligand>
</feature>
<feature type="binding site" evidence="2 5">
    <location>
        <position position="90"/>
    </location>
    <ligand>
        <name>Zn(2+)</name>
        <dbReference type="ChEBI" id="CHEBI:29105"/>
    </ligand>
</feature>
<feature type="binding site" evidence="2 5">
    <location>
        <position position="97"/>
    </location>
    <ligand>
        <name>Zn(2+)</name>
        <dbReference type="ChEBI" id="CHEBI:29105"/>
    </ligand>
</feature>
<feature type="modified residue" description="Phosphothreonine; by CDK1" evidence="1">
    <location>
        <position position="47"/>
    </location>
</feature>
<feature type="sequence conflict" description="In Ref. 3; AAI69764/AAI69762." evidence="12" ref="3">
    <original>M</original>
    <variation>T</variation>
    <location>
        <position position="122"/>
    </location>
</feature>
<dbReference type="EMBL" id="AY174765">
    <property type="protein sequence ID" value="AAO20085.1"/>
    <property type="molecule type" value="mRNA"/>
</dbReference>
<dbReference type="EMBL" id="AB197250">
    <property type="protein sequence ID" value="BAE02679.1"/>
    <property type="molecule type" value="mRNA"/>
</dbReference>
<dbReference type="EMBL" id="BC169762">
    <property type="protein sequence ID" value="AAI69762.1"/>
    <property type="molecule type" value="mRNA"/>
</dbReference>
<dbReference type="EMBL" id="BC169764">
    <property type="protein sequence ID" value="AAI69764.1"/>
    <property type="molecule type" value="mRNA"/>
</dbReference>
<dbReference type="RefSeq" id="NP_001082412.1">
    <property type="nucleotide sequence ID" value="NM_001088943.1"/>
</dbReference>
<dbReference type="SMR" id="Q804H7"/>
<dbReference type="MEROPS" id="I32.005"/>
<dbReference type="GeneID" id="398454"/>
<dbReference type="KEGG" id="xla:398454"/>
<dbReference type="AGR" id="Xenbase:XB-GENE-966748"/>
<dbReference type="CTD" id="398454"/>
<dbReference type="Xenbase" id="XB-GENE-966748">
    <property type="gene designation" value="birc5l.L"/>
</dbReference>
<dbReference type="OrthoDB" id="2196114at2759"/>
<dbReference type="Proteomes" id="UP000186698">
    <property type="component" value="Chromosome 9_10L"/>
</dbReference>
<dbReference type="Bgee" id="398454">
    <property type="expression patterns" value="Expressed in blastula and 17 other cell types or tissues"/>
</dbReference>
<dbReference type="GO" id="GO:0032133">
    <property type="term" value="C:chromosome passenger complex"/>
    <property type="evidence" value="ECO:0000353"/>
    <property type="project" value="UniProtKB"/>
</dbReference>
<dbReference type="GO" id="GO:0005737">
    <property type="term" value="C:cytoplasm"/>
    <property type="evidence" value="ECO:0000318"/>
    <property type="project" value="GO_Central"/>
</dbReference>
<dbReference type="GO" id="GO:0000776">
    <property type="term" value="C:kinetochore"/>
    <property type="evidence" value="ECO:0000250"/>
    <property type="project" value="UniProtKB"/>
</dbReference>
<dbReference type="GO" id="GO:0030496">
    <property type="term" value="C:midbody"/>
    <property type="evidence" value="ECO:0000250"/>
    <property type="project" value="UniProtKB"/>
</dbReference>
<dbReference type="GO" id="GO:0005634">
    <property type="term" value="C:nucleus"/>
    <property type="evidence" value="ECO:0000250"/>
    <property type="project" value="UniProtKB"/>
</dbReference>
<dbReference type="GO" id="GO:0051233">
    <property type="term" value="C:spindle midzone"/>
    <property type="evidence" value="ECO:0000318"/>
    <property type="project" value="GO_Central"/>
</dbReference>
<dbReference type="GO" id="GO:0046872">
    <property type="term" value="F:metal ion binding"/>
    <property type="evidence" value="ECO:0007669"/>
    <property type="project" value="UniProtKB-KW"/>
</dbReference>
<dbReference type="GO" id="GO:0046965">
    <property type="term" value="F:nuclear retinoid X receptor binding"/>
    <property type="evidence" value="ECO:0000353"/>
    <property type="project" value="UniProtKB"/>
</dbReference>
<dbReference type="GO" id="GO:0007059">
    <property type="term" value="P:chromosome segregation"/>
    <property type="evidence" value="ECO:0000318"/>
    <property type="project" value="GO_Central"/>
</dbReference>
<dbReference type="GO" id="GO:0000281">
    <property type="term" value="P:mitotic cytokinesis"/>
    <property type="evidence" value="ECO:0000318"/>
    <property type="project" value="GO_Central"/>
</dbReference>
<dbReference type="GO" id="GO:0007052">
    <property type="term" value="P:mitotic spindle organization"/>
    <property type="evidence" value="ECO:0000318"/>
    <property type="project" value="GO_Central"/>
</dbReference>
<dbReference type="GO" id="GO:0043066">
    <property type="term" value="P:negative regulation of apoptotic process"/>
    <property type="evidence" value="ECO:0000250"/>
    <property type="project" value="UniProtKB"/>
</dbReference>
<dbReference type="GO" id="GO:0045892">
    <property type="term" value="P:negative regulation of DNA-templated transcription"/>
    <property type="evidence" value="ECO:0000250"/>
    <property type="project" value="UniProtKB"/>
</dbReference>
<dbReference type="GO" id="GO:0001944">
    <property type="term" value="P:vasculature development"/>
    <property type="evidence" value="ECO:0000250"/>
    <property type="project" value="UniProtKB"/>
</dbReference>
<dbReference type="CDD" id="cd00022">
    <property type="entry name" value="BIR"/>
    <property type="match status" value="1"/>
</dbReference>
<dbReference type="FunFam" id="1.10.1170.10:FF:000009">
    <property type="entry name" value="Baculoviral IAP repeat-containing protein 5"/>
    <property type="match status" value="1"/>
</dbReference>
<dbReference type="Gene3D" id="1.10.1170.10">
    <property type="entry name" value="Inhibitor Of Apoptosis Protein (2mihbC-IAP-1), Chain A"/>
    <property type="match status" value="1"/>
</dbReference>
<dbReference type="InterPro" id="IPR051190">
    <property type="entry name" value="Baculoviral_IAP"/>
</dbReference>
<dbReference type="InterPro" id="IPR001370">
    <property type="entry name" value="BIR_rpt"/>
</dbReference>
<dbReference type="PANTHER" id="PTHR46771:SF3">
    <property type="entry name" value="BACULOVIRAL IAP REPEAT-CONTAINING PROTEIN 5"/>
    <property type="match status" value="1"/>
</dbReference>
<dbReference type="PANTHER" id="PTHR46771">
    <property type="entry name" value="DETERIN"/>
    <property type="match status" value="1"/>
</dbReference>
<dbReference type="Pfam" id="PF00653">
    <property type="entry name" value="BIR"/>
    <property type="match status" value="1"/>
</dbReference>
<dbReference type="SMART" id="SM00238">
    <property type="entry name" value="BIR"/>
    <property type="match status" value="1"/>
</dbReference>
<dbReference type="SUPFAM" id="SSF57924">
    <property type="entry name" value="Inhibitor of apoptosis (IAP) repeat"/>
    <property type="match status" value="1"/>
</dbReference>
<dbReference type="PROSITE" id="PS50143">
    <property type="entry name" value="BIR_REPEAT_2"/>
    <property type="match status" value="1"/>
</dbReference>
<evidence type="ECO:0000250" key="1"/>
<evidence type="ECO:0000250" key="2">
    <source>
        <dbReference type="UniProtKB" id="O15392"/>
    </source>
</evidence>
<evidence type="ECO:0000250" key="3">
    <source>
        <dbReference type="UniProtKB" id="Q50L39"/>
    </source>
</evidence>
<evidence type="ECO:0000255" key="4"/>
<evidence type="ECO:0000255" key="5">
    <source>
        <dbReference type="PROSITE-ProRule" id="PRU00029"/>
    </source>
</evidence>
<evidence type="ECO:0000269" key="6">
    <source>
    </source>
</evidence>
<evidence type="ECO:0000269" key="7">
    <source>
    </source>
</evidence>
<evidence type="ECO:0000269" key="8">
    <source>
    </source>
</evidence>
<evidence type="ECO:0000269" key="9">
    <source>
    </source>
</evidence>
<evidence type="ECO:0000303" key="10">
    <source>
    </source>
</evidence>
<evidence type="ECO:0000303" key="11">
    <source>
    </source>
</evidence>
<evidence type="ECO:0000305" key="12"/>
<evidence type="ECO:0000312" key="13">
    <source>
        <dbReference type="EMBL" id="AAI69762.1"/>
    </source>
</evidence>
<evidence type="ECO:0000312" key="14">
    <source>
        <dbReference type="EMBL" id="AAO20085.1"/>
    </source>
</evidence>
<evidence type="ECO:0000312" key="15">
    <source>
        <dbReference type="EMBL" id="BAE02679.1"/>
    </source>
</evidence>
<reference evidence="12 14" key="1">
    <citation type="journal article" date="2003" name="Biochem. Biophys. Res. Commun.">
        <title>Molecular cloning and characterization of a novel inhibitor of apoptosis protein from Xenopus laevis.</title>
        <authorList>
            <person name="Song K.-H."/>
            <person name="Kim T.-M."/>
            <person name="Kim H.-J."/>
            <person name="Kim J.W."/>
            <person name="Kim H.-H."/>
            <person name="Kwon H.-B."/>
            <person name="Kim W.S."/>
            <person name="Choi H.-S."/>
        </authorList>
    </citation>
    <scope>NUCLEOTIDE SEQUENCE [MRNA]</scope>
    <scope>INTERACTION WITH RXRA</scope>
    <scope>TISSUE SPECIFICITY</scope>
    <scope>DEVELOPMENTAL STAGE</scope>
    <source>
        <tissue evidence="6">Embryo</tissue>
    </source>
</reference>
<reference key="2">
    <citation type="journal article" date="2005" name="FEBS J.">
        <title>Apoptosis-inhibiting activities of BIR family proteins in Xenopus egg extracts.</title>
        <authorList>
            <person name="Tsuchiya Y."/>
            <person name="Murai S."/>
            <person name="Yamashita S."/>
        </authorList>
    </citation>
    <scope>NUCLEOTIDE SEQUENCE [MRNA]</scope>
    <scope>FUNCTION</scope>
    <source>
        <tissue>Oocyte</tissue>
    </source>
</reference>
<reference evidence="15" key="3">
    <citation type="submission" date="2008-11" db="EMBL/GenBank/DDBJ databases">
        <authorList>
            <consortium name="NIH - Xenopus Gene Collection (XGC) project"/>
        </authorList>
    </citation>
    <scope>NUCLEOTIDE SEQUENCE [LARGE SCALE MRNA]</scope>
    <source>
        <tissue evidence="13">Gastrula</tissue>
    </source>
</reference>
<reference evidence="12" key="4">
    <citation type="journal article" date="2007" name="Dev. Cell">
        <title>Chromosomal enrichment and activation of the aurora B pathway are coupled to spatially regulate spindle assembly.</title>
        <authorList>
            <person name="Kelly A.E."/>
            <person name="Sampath S.C."/>
            <person name="Maniar T.A."/>
            <person name="Woo E.M."/>
            <person name="Chait B.T."/>
            <person name="Funabiki H."/>
        </authorList>
    </citation>
    <scope>FUNCTION</scope>
    <scope>INTERACTION WITH INCENP</scope>
    <scope>IDENTIFICATION IN A COMPLEX WITH AURKB; BIRC5.1; CDCA8; CDCA9 AND INCENP</scope>
</reference>
<reference evidence="12" key="5">
    <citation type="journal article" date="2005" name="Int. Rev. Cytol.">
        <title>Survivin: a protein with dual roles in mitosis and apoptosis.</title>
        <authorList>
            <person name="Wheatley S.P."/>
            <person name="McNeish I.A."/>
        </authorList>
    </citation>
    <scope>REVIEW</scope>
</reference>
<protein>
    <recommendedName>
        <fullName>Baculoviral IAP repeat-containing protein 5.2-B</fullName>
    </recommendedName>
    <alternativeName>
        <fullName evidence="10">Survivin in Xenopus</fullName>
        <shortName evidence="14">SIX</shortName>
    </alternativeName>
    <alternativeName>
        <fullName evidence="11">Survivin2-B</fullName>
        <shortName evidence="15">XSurvivin2B</shortName>
    </alternativeName>
</protein>
<keyword id="KW-0131">Cell cycle</keyword>
<keyword id="KW-0132">Cell division</keyword>
<keyword id="KW-0137">Centromere</keyword>
<keyword id="KW-0158">Chromosome</keyword>
<keyword id="KW-0159">Chromosome partition</keyword>
<keyword id="KW-0963">Cytoplasm</keyword>
<keyword id="KW-0206">Cytoskeleton</keyword>
<keyword id="KW-0479">Metal-binding</keyword>
<keyword id="KW-0498">Mitosis</keyword>
<keyword id="KW-0539">Nucleus</keyword>
<keyword id="KW-0597">Phosphoprotein</keyword>
<keyword id="KW-1185">Reference proteome</keyword>
<keyword id="KW-0832">Ubl conjugation</keyword>
<keyword id="KW-0862">Zinc</keyword>
<gene>
    <name type="primary">birc5.2-b</name>
    <name evidence="10" type="synonym">six</name>
</gene>
<sequence>MLSISPIVSLRRCDNEPSMPDEWRLYNLATRLRTFSNWPFTEDCACTPERMAEAGFVHCPTDNSPDVVKCFFCLKELEGWQPEDDPMDEHKKHSPSCLFIALKKKAEELTLSEFLKLDLEHMKIKMQKQMNLHIERFQAKANEVRGHLEKLDADETQ</sequence>
<name>BI52B_XENLA</name>
<accession>Q804H7</accession>
<accession>B7ZQC9</accession>
<comment type="function">
    <text evidence="3 7 8 9">Does not appear to exhibit anti-apoptotic activity. Plays a role in increasing blood vessel size during development (By similarity). Component of the chromosomal passenger complex (CPC), a complex that acts as a key regulator of mitosis. The CPC complex has essential functions at the centromere in ensuring correct chromosome alignment and segregation and is required for chromatin-induced microtubule stabilization and spindle assembly.</text>
</comment>
<comment type="subunit">
    <text evidence="6 9">Component of the CPC at least composed of survivin/birc5, incenp, cdca8/borealin and/or cdca9/dasra-A, and aurkb/aurora-B. Interacts directly with incenp (via N-terminus). Interacts with rxra; the interaction is stronger in the absence of 9-cis retinoic acids.</text>
</comment>
<comment type="subcellular location">
    <subcellularLocation>
        <location evidence="2">Cytoplasm</location>
    </subcellularLocation>
    <subcellularLocation>
        <location evidence="2">Nucleus</location>
    </subcellularLocation>
    <subcellularLocation>
        <location evidence="2">Chromosome</location>
        <location evidence="2">Centromere</location>
    </subcellularLocation>
    <subcellularLocation>
        <location evidence="1">Cytoplasm</location>
        <location evidence="1">Cytoskeleton</location>
        <location evidence="1">Spindle</location>
    </subcellularLocation>
    <text evidence="2">Localizes on chromosome arms and inner centromeres from prophase through metaphase and then transferring to the spindle midzone and midbody from anaphase through cytokinesis.</text>
</comment>
<comment type="tissue specificity">
    <text evidence="6">Exhibits strong and homogeneous expression in developing oocytes. In embryos, expressed in the animal hemisphere from one-cell to yolk plug stages, and highly expressed in the future brain and dorsal region of the neural tube at the neurula stage and early tail-bud stage. At tadpole stages, expression is restricted at a low level to the head region.</text>
</comment>
<comment type="developmental stage">
    <text evidence="6">Expressed both maternally and zygotically. In oocytes, expression gradually decreases throughout successive oocyte stages. Expression is maintained up to the larval stage (stage 35). Not expressed in adults, with the exception of expression in the ovary and weak expression in the testis.</text>
</comment>
<comment type="domain">
    <text evidence="3">The BIR2 domain is required for vascular development.</text>
</comment>
<comment type="PTM">
    <text evidence="2">Ubiquitination is required for centrosome-targeting.</text>
</comment>
<comment type="similarity">
    <text evidence="4">Belongs to the IAP family.</text>
</comment>
<proteinExistence type="evidence at protein level"/>